<protein>
    <recommendedName>
        <fullName>Phosphorylase b kinase gamma catalytic chain, skeletal muscle/heart isoform</fullName>
        <ecNumber>2.7.11.19</ecNumber>
    </recommendedName>
    <alternativeName>
        <fullName>Phosphorylase kinase subunit gamma-1</fullName>
    </alternativeName>
    <alternativeName>
        <fullName>Serine/threonine-protein kinase PHKG1</fullName>
        <ecNumber>2.7.11.1</ecNumber>
        <ecNumber>2.7.11.26</ecNumber>
    </alternativeName>
</protein>
<dbReference type="EC" id="2.7.11.19"/>
<dbReference type="EC" id="2.7.11.1"/>
<dbReference type="EC" id="2.7.11.26"/>
<dbReference type="EMBL" id="X07320">
    <property type="protein sequence ID" value="CAA30280.1"/>
    <property type="molecule type" value="mRNA"/>
</dbReference>
<dbReference type="PIR" id="S00731">
    <property type="entry name" value="S00731"/>
</dbReference>
<dbReference type="RefSeq" id="NP_113761.1">
    <property type="nucleotide sequence ID" value="NM_031573.2"/>
</dbReference>
<dbReference type="SMR" id="P13286"/>
<dbReference type="BioGRID" id="248008">
    <property type="interactions" value="1"/>
</dbReference>
<dbReference type="FunCoup" id="P13286">
    <property type="interactions" value="1265"/>
</dbReference>
<dbReference type="STRING" id="10116.ENSRNOP00000001222"/>
<dbReference type="iPTMnet" id="P13286"/>
<dbReference type="PhosphoSitePlus" id="P13286"/>
<dbReference type="PaxDb" id="10116-ENSRNOP00000001222"/>
<dbReference type="Ensembl" id="ENSRNOT00000001222.5">
    <property type="protein sequence ID" value="ENSRNOP00000001222.1"/>
    <property type="gene ID" value="ENSRNOG00000000920.5"/>
</dbReference>
<dbReference type="GeneID" id="29353"/>
<dbReference type="KEGG" id="rno:29353"/>
<dbReference type="AGR" id="RGD:3325"/>
<dbReference type="CTD" id="5260"/>
<dbReference type="RGD" id="3325">
    <property type="gene designation" value="Phkg1"/>
</dbReference>
<dbReference type="eggNOG" id="KOG0599">
    <property type="taxonomic scope" value="Eukaryota"/>
</dbReference>
<dbReference type="GeneTree" id="ENSGT00940000158139"/>
<dbReference type="HOGENOM" id="CLU_000288_63_0_1"/>
<dbReference type="InParanoid" id="P13286"/>
<dbReference type="OMA" id="MDPYRVK"/>
<dbReference type="OrthoDB" id="419455at2759"/>
<dbReference type="PhylomeDB" id="P13286"/>
<dbReference type="TreeFam" id="TF320349"/>
<dbReference type="BRENDA" id="2.7.11.19">
    <property type="organism ID" value="5301"/>
</dbReference>
<dbReference type="Reactome" id="R-RNO-70221">
    <property type="pathway name" value="Glycogen breakdown (glycogenolysis)"/>
</dbReference>
<dbReference type="PRO" id="PR:P13286"/>
<dbReference type="Proteomes" id="UP000002494">
    <property type="component" value="Chromosome 12"/>
</dbReference>
<dbReference type="Bgee" id="ENSRNOG00000000920">
    <property type="expression patterns" value="Expressed in skeletal muscle tissue and 16 other cell types or tissues"/>
</dbReference>
<dbReference type="GO" id="GO:0005737">
    <property type="term" value="C:cytoplasm"/>
    <property type="evidence" value="ECO:0000318"/>
    <property type="project" value="GO_Central"/>
</dbReference>
<dbReference type="GO" id="GO:0005964">
    <property type="term" value="C:phosphorylase kinase complex"/>
    <property type="evidence" value="ECO:0000314"/>
    <property type="project" value="RGD"/>
</dbReference>
<dbReference type="GO" id="GO:0005524">
    <property type="term" value="F:ATP binding"/>
    <property type="evidence" value="ECO:0000314"/>
    <property type="project" value="RGD"/>
</dbReference>
<dbReference type="GO" id="GO:0005516">
    <property type="term" value="F:calmodulin binding"/>
    <property type="evidence" value="ECO:0007669"/>
    <property type="project" value="UniProtKB-KW"/>
</dbReference>
<dbReference type="GO" id="GO:0019899">
    <property type="term" value="F:enzyme binding"/>
    <property type="evidence" value="ECO:0000314"/>
    <property type="project" value="RGD"/>
</dbReference>
<dbReference type="GO" id="GO:0004689">
    <property type="term" value="F:phosphorylase kinase activity"/>
    <property type="evidence" value="ECO:0000314"/>
    <property type="project" value="RGD"/>
</dbReference>
<dbReference type="GO" id="GO:0106310">
    <property type="term" value="F:protein serine kinase activity"/>
    <property type="evidence" value="ECO:0007669"/>
    <property type="project" value="RHEA"/>
</dbReference>
<dbReference type="GO" id="GO:0005977">
    <property type="term" value="P:glycogen metabolic process"/>
    <property type="evidence" value="ECO:0000314"/>
    <property type="project" value="RGD"/>
</dbReference>
<dbReference type="GO" id="GO:0007165">
    <property type="term" value="P:signal transduction"/>
    <property type="evidence" value="ECO:0000318"/>
    <property type="project" value="GO_Central"/>
</dbReference>
<dbReference type="FunFam" id="3.30.200.20:FF:000138">
    <property type="entry name" value="Phosphorylase b kinase gamma catalytic chain, liver/testis"/>
    <property type="match status" value="1"/>
</dbReference>
<dbReference type="FunFam" id="1.10.510.10:FF:000149">
    <property type="entry name" value="phosphorylase b kinase gamma catalytic chain, liver/testis isoform"/>
    <property type="match status" value="1"/>
</dbReference>
<dbReference type="Gene3D" id="3.30.200.20">
    <property type="entry name" value="Phosphorylase Kinase, domain 1"/>
    <property type="match status" value="1"/>
</dbReference>
<dbReference type="Gene3D" id="1.10.510.10">
    <property type="entry name" value="Transferase(Phosphotransferase) domain 1"/>
    <property type="match status" value="1"/>
</dbReference>
<dbReference type="InterPro" id="IPR011009">
    <property type="entry name" value="Kinase-like_dom_sf"/>
</dbReference>
<dbReference type="InterPro" id="IPR002291">
    <property type="entry name" value="Phosph_kin_gamma"/>
</dbReference>
<dbReference type="InterPro" id="IPR000719">
    <property type="entry name" value="Prot_kinase_dom"/>
</dbReference>
<dbReference type="InterPro" id="IPR017441">
    <property type="entry name" value="Protein_kinase_ATP_BS"/>
</dbReference>
<dbReference type="InterPro" id="IPR008271">
    <property type="entry name" value="Ser/Thr_kinase_AS"/>
</dbReference>
<dbReference type="PANTHER" id="PTHR24347">
    <property type="entry name" value="SERINE/THREONINE-PROTEIN KINASE"/>
    <property type="match status" value="1"/>
</dbReference>
<dbReference type="Pfam" id="PF00069">
    <property type="entry name" value="Pkinase"/>
    <property type="match status" value="1"/>
</dbReference>
<dbReference type="PRINTS" id="PR01049">
    <property type="entry name" value="PHOSPHBKNASE"/>
</dbReference>
<dbReference type="SMART" id="SM00220">
    <property type="entry name" value="S_TKc"/>
    <property type="match status" value="1"/>
</dbReference>
<dbReference type="SUPFAM" id="SSF56112">
    <property type="entry name" value="Protein kinase-like (PK-like)"/>
    <property type="match status" value="1"/>
</dbReference>
<dbReference type="PROSITE" id="PS00107">
    <property type="entry name" value="PROTEIN_KINASE_ATP"/>
    <property type="match status" value="1"/>
</dbReference>
<dbReference type="PROSITE" id="PS50011">
    <property type="entry name" value="PROTEIN_KINASE_DOM"/>
    <property type="match status" value="1"/>
</dbReference>
<dbReference type="PROSITE" id="PS00108">
    <property type="entry name" value="PROTEIN_KINASE_ST"/>
    <property type="match status" value="1"/>
</dbReference>
<accession>P13286</accession>
<proteinExistence type="evidence at transcript level"/>
<evidence type="ECO:0000250" key="1"/>
<evidence type="ECO:0000255" key="2">
    <source>
        <dbReference type="PROSITE-ProRule" id="PRU00159"/>
    </source>
</evidence>
<evidence type="ECO:0000255" key="3">
    <source>
        <dbReference type="PROSITE-ProRule" id="PRU10027"/>
    </source>
</evidence>
<evidence type="ECO:0000305" key="4"/>
<comment type="function">
    <text evidence="1">Catalytic subunit of the phosphorylase b kinase (PHK), which mediates the neural and hormonal regulation of glycogen breakdown (glycogenolysis) by phosphorylating and thereby activating glycogen phosphorylase. In vitro, phosphorylates PYGM, TNNI3, MAPT/TAU, GAP43 and NRGN/RC3 (By similarity).</text>
</comment>
<comment type="catalytic activity">
    <reaction>
        <text>2 ATP + phosphorylase b = 2 ADP + phosphorylase a.</text>
        <dbReference type="EC" id="2.7.11.19"/>
    </reaction>
</comment>
<comment type="catalytic activity">
    <reaction>
        <text>L-seryl-[tau protein] + ATP = O-phospho-L-seryl-[tau protein] + ADP + H(+)</text>
        <dbReference type="Rhea" id="RHEA:12801"/>
        <dbReference type="Rhea" id="RHEA-COMP:13701"/>
        <dbReference type="Rhea" id="RHEA-COMP:13702"/>
        <dbReference type="ChEBI" id="CHEBI:15378"/>
        <dbReference type="ChEBI" id="CHEBI:29999"/>
        <dbReference type="ChEBI" id="CHEBI:30616"/>
        <dbReference type="ChEBI" id="CHEBI:83421"/>
        <dbReference type="ChEBI" id="CHEBI:456216"/>
        <dbReference type="EC" id="2.7.11.26"/>
    </reaction>
</comment>
<comment type="catalytic activity">
    <reaction>
        <text>L-threonyl-[tau protein] + ATP = O-phospho-L-threonyl-[tau protein] + ADP + H(+)</text>
        <dbReference type="Rhea" id="RHEA:53904"/>
        <dbReference type="Rhea" id="RHEA-COMP:13703"/>
        <dbReference type="Rhea" id="RHEA-COMP:13704"/>
        <dbReference type="ChEBI" id="CHEBI:15378"/>
        <dbReference type="ChEBI" id="CHEBI:30013"/>
        <dbReference type="ChEBI" id="CHEBI:30616"/>
        <dbReference type="ChEBI" id="CHEBI:61977"/>
        <dbReference type="ChEBI" id="CHEBI:456216"/>
        <dbReference type="EC" id="2.7.11.26"/>
    </reaction>
</comment>
<comment type="catalytic activity">
    <reaction>
        <text>L-seryl-[protein] + ATP = O-phospho-L-seryl-[protein] + ADP + H(+)</text>
        <dbReference type="Rhea" id="RHEA:17989"/>
        <dbReference type="Rhea" id="RHEA-COMP:9863"/>
        <dbReference type="Rhea" id="RHEA-COMP:11604"/>
        <dbReference type="ChEBI" id="CHEBI:15378"/>
        <dbReference type="ChEBI" id="CHEBI:29999"/>
        <dbReference type="ChEBI" id="CHEBI:30616"/>
        <dbReference type="ChEBI" id="CHEBI:83421"/>
        <dbReference type="ChEBI" id="CHEBI:456216"/>
        <dbReference type="EC" id="2.7.11.1"/>
    </reaction>
</comment>
<comment type="catalytic activity">
    <reaction>
        <text>L-threonyl-[protein] + ATP = O-phospho-L-threonyl-[protein] + ADP + H(+)</text>
        <dbReference type="Rhea" id="RHEA:46608"/>
        <dbReference type="Rhea" id="RHEA-COMP:11060"/>
        <dbReference type="Rhea" id="RHEA-COMP:11605"/>
        <dbReference type="ChEBI" id="CHEBI:15378"/>
        <dbReference type="ChEBI" id="CHEBI:30013"/>
        <dbReference type="ChEBI" id="CHEBI:30616"/>
        <dbReference type="ChEBI" id="CHEBI:61977"/>
        <dbReference type="ChEBI" id="CHEBI:456216"/>
        <dbReference type="EC" id="2.7.11.1"/>
    </reaction>
</comment>
<comment type="subunit">
    <text>Hexadecamer of 4 heterotetramers, each composed of alpha, beta, gamma, and delta subunits. Alpha (PHKA1 or PHKA2) and beta (PHKB) are regulatory subunits, gamma (PHKG1 or PHKG2) is the catalytic subunit, and delta is calmodulin.</text>
</comment>
<comment type="domain">
    <text evidence="1">The two calmodulin-binding domains appear to act in concert to bind a single molecule of calmodulin and are pseudosubstrate/autoinhibitory domains.</text>
</comment>
<comment type="similarity">
    <text evidence="4">Belongs to the protein kinase superfamily. CAMK Ser/Thr protein kinase family.</text>
</comment>
<sequence length="388" mass="45015">MTRDEALPDSHSAQNFYENYEPKEILGRGVSSVVRRCIHKPTCQEYAVKIIDITGGGSFSSEEVQELREATLKEVDILQKVSGHPNIIQLKDTYETNTFFFLVFDLMKRGELFDYLTEKVTLTEKETRKIMRALLEVVCTLHKLNIVHRDLKPENILLDDNMNIKLTDFGFSCQLQPGEKLREVCGTPSYLAPEIIQCSMDEGHPGYGKEVDMWSTGVIMYTLLAGSPPFWHRKQMLMLRMIMDGKYQFGSPEWDDYSDTVKDLVSRFLVVQPQDRCSAEEALAHPFFQEYVVEEVRHFSPRGKFKVICLTVLASVRIYYQYRRVKPVTREIVIRDPYALRPLRRLIDAYAFRIYGHWVKKGQQQNRAALFENTPKAVLLSLAEEEDF</sequence>
<organism>
    <name type="scientific">Rattus norvegicus</name>
    <name type="common">Rat</name>
    <dbReference type="NCBI Taxonomy" id="10116"/>
    <lineage>
        <taxon>Eukaryota</taxon>
        <taxon>Metazoa</taxon>
        <taxon>Chordata</taxon>
        <taxon>Craniata</taxon>
        <taxon>Vertebrata</taxon>
        <taxon>Euteleostomi</taxon>
        <taxon>Mammalia</taxon>
        <taxon>Eutheria</taxon>
        <taxon>Euarchontoglires</taxon>
        <taxon>Glires</taxon>
        <taxon>Rodentia</taxon>
        <taxon>Myomorpha</taxon>
        <taxon>Muroidea</taxon>
        <taxon>Muridae</taxon>
        <taxon>Murinae</taxon>
        <taxon>Rattus</taxon>
    </lineage>
</organism>
<name>PHKG1_RAT</name>
<gene>
    <name type="primary">Phkg1</name>
    <name type="synonym">Phkg</name>
</gene>
<reference key="1">
    <citation type="journal article" date="1988" name="Nucleic Acids Res.">
        <title>Nucleotide sequence of cDNA encoding the catalytic subunit of phosphorylase kinase from rat soleus muscle.</title>
        <authorList>
            <person name="Cawley K.C."/>
            <person name="Ramachandran C."/>
            <person name="Gorin F.A."/>
            <person name="Walsh D.A."/>
        </authorList>
    </citation>
    <scope>NUCLEOTIDE SEQUENCE [MRNA]</scope>
</reference>
<reference key="2">
    <citation type="journal article" date="1993" name="J. Biol. Chem.">
        <title>Characterization of the gene for rat phosphorylase kinase catalytic subunit.</title>
        <authorList>
            <person name="Cawley K.C."/>
            <person name="Akita C.G."/>
            <person name="Angelos K.L."/>
            <person name="Walsh D.A."/>
        </authorList>
    </citation>
    <scope>NUCLEOTIDE SEQUENCE [MRNA]</scope>
    <source>
        <strain>Wistar</strain>
    </source>
</reference>
<feature type="chain" id="PRO_0000086511" description="Phosphorylase b kinase gamma catalytic chain, skeletal muscle/heart isoform">
    <location>
        <begin position="1"/>
        <end position="388"/>
    </location>
</feature>
<feature type="domain" description="Protein kinase" evidence="2">
    <location>
        <begin position="20"/>
        <end position="288"/>
    </location>
</feature>
<feature type="region of interest" description="Calmodulin-binding (domain-N)">
    <location>
        <begin position="303"/>
        <end position="327"/>
    </location>
</feature>
<feature type="region of interest" description="Calmodulin-binding (domain-C)">
    <location>
        <begin position="343"/>
        <end position="367"/>
    </location>
</feature>
<feature type="active site" description="Proton acceptor" evidence="2 3">
    <location>
        <position position="150"/>
    </location>
</feature>
<feature type="binding site" evidence="2">
    <location>
        <begin position="26"/>
        <end position="34"/>
    </location>
    <ligand>
        <name>ATP</name>
        <dbReference type="ChEBI" id="CHEBI:30616"/>
    </ligand>
</feature>
<feature type="binding site" evidence="2">
    <location>
        <position position="49"/>
    </location>
    <ligand>
        <name>ATP</name>
        <dbReference type="ChEBI" id="CHEBI:30616"/>
    </ligand>
</feature>
<keyword id="KW-0067">ATP-binding</keyword>
<keyword id="KW-0112">Calmodulin-binding</keyword>
<keyword id="KW-0119">Carbohydrate metabolism</keyword>
<keyword id="KW-0321">Glycogen metabolism</keyword>
<keyword id="KW-0418">Kinase</keyword>
<keyword id="KW-0514">Muscle protein</keyword>
<keyword id="KW-0547">Nucleotide-binding</keyword>
<keyword id="KW-1185">Reference proteome</keyword>
<keyword id="KW-0723">Serine/threonine-protein kinase</keyword>
<keyword id="KW-0808">Transferase</keyword>